<keyword id="KW-1185">Reference proteome</keyword>
<proteinExistence type="inferred from homology"/>
<accession>P47278</accession>
<sequence length="666" mass="77303">MKTIHKLFLGLCLPATLGPLLGIVVTNTDQSIKFTSKSNSINKNNQNKELALLRDNLMNEAKVDEPLSFEKRFENFKNKYSDIHSLNNSVFSLHDVYDLLGGFKQSLTTFFDEVIAQQQKIKDADKIFPSTKDNPPKEENPNVLDTLANYQGAGFFPSLGKNGFNLPEAVFQNFTDFRINDYKIKNFNVDLVSENDIIKHDKVRYAFEVKFNIALVLSINKSNVDFDFDFILKTDNFSDIENFNEIFNRKPALQFRFYTKINVHKLSFNGSDSTYIANILLQDQFNLLEIDLNKSIYALDLENAKERFDKEFVQPLYQKRREAKLAWEEEQRRIAEEQRRQEEERARILKELKEKAEKDKRVKEAQNNLQKALGNLDTFFNFFSSGQDRVLLGFDPNKYNVQTREGLFKALQISYSNFKTWTFYISLLGWKEGSVKLLKKPIWNALRDDKAFQYAFGLGPNTSEQQLGRVTLPGYGYEGIRMSDWLRWALGYYTSFTLSPPKNVEANLIGDANDKKHIWISPHTFKLNREYGDGERFKGKAYRFKLSISFELEGHLTAHWWTIAFRGSIPGSWSGKLRVTHEFDGDVPYYRLHTTPPQYRLTDDMKLLFVPHSIQRVTAVGNESINGLLRSQNLHNLERQSYEATAPIDLISYMLYAISDKKPPQK</sequence>
<dbReference type="EMBL" id="L43967">
    <property type="protein sequence ID" value="AAC71248.1"/>
    <property type="molecule type" value="Genomic_DNA"/>
</dbReference>
<dbReference type="PIR" id="E64203">
    <property type="entry name" value="E64203"/>
</dbReference>
<dbReference type="RefSeq" id="WP_010869297.1">
    <property type="nucleotide sequence ID" value="NC_000908.2"/>
</dbReference>
<dbReference type="SMR" id="P47278"/>
<dbReference type="STRING" id="243273.MG_032"/>
<dbReference type="GeneID" id="88282147"/>
<dbReference type="KEGG" id="mge:MG_032"/>
<dbReference type="eggNOG" id="COG2268">
    <property type="taxonomic scope" value="Bacteria"/>
</dbReference>
<dbReference type="HOGENOM" id="CLU_412083_0_0_14"/>
<dbReference type="InParanoid" id="P47278"/>
<dbReference type="OrthoDB" id="394965at2"/>
<dbReference type="BioCyc" id="MGEN243273:G1GJ2-32-MONOMER"/>
<dbReference type="Proteomes" id="UP000000807">
    <property type="component" value="Chromosome"/>
</dbReference>
<dbReference type="InterPro" id="IPR004306">
    <property type="entry name" value="DUF237"/>
</dbReference>
<dbReference type="InterPro" id="IPR004319">
    <property type="entry name" value="DUF240"/>
</dbReference>
<dbReference type="Pfam" id="PF03072">
    <property type="entry name" value="DUF237"/>
    <property type="match status" value="1"/>
</dbReference>
<dbReference type="Pfam" id="PF03086">
    <property type="entry name" value="DUF240"/>
    <property type="match status" value="1"/>
</dbReference>
<evidence type="ECO:0000305" key="1"/>
<organism>
    <name type="scientific">Mycoplasma genitalium (strain ATCC 33530 / DSM 19775 / NCTC 10195 / G37)</name>
    <name type="common">Mycoplasmoides genitalium</name>
    <dbReference type="NCBI Taxonomy" id="243273"/>
    <lineage>
        <taxon>Bacteria</taxon>
        <taxon>Bacillati</taxon>
        <taxon>Mycoplasmatota</taxon>
        <taxon>Mycoplasmoidales</taxon>
        <taxon>Mycoplasmoidaceae</taxon>
        <taxon>Mycoplasmoides</taxon>
    </lineage>
</organism>
<name>Y032_MYCGE</name>
<protein>
    <recommendedName>
        <fullName>Uncharacterized protein MG032</fullName>
    </recommendedName>
</protein>
<gene>
    <name type="ordered locus">MG032</name>
</gene>
<feature type="chain" id="PRO_0000215244" description="Uncharacterized protein MG032">
    <location>
        <begin position="1"/>
        <end position="666"/>
    </location>
</feature>
<reference key="1">
    <citation type="journal article" date="1995" name="Science">
        <title>The minimal gene complement of Mycoplasma genitalium.</title>
        <authorList>
            <person name="Fraser C.M."/>
            <person name="Gocayne J.D."/>
            <person name="White O."/>
            <person name="Adams M.D."/>
            <person name="Clayton R.A."/>
            <person name="Fleischmann R.D."/>
            <person name="Bult C.J."/>
            <person name="Kerlavage A.R."/>
            <person name="Sutton G.G."/>
            <person name="Kelley J.M."/>
            <person name="Fritchman J.L."/>
            <person name="Weidman J.F."/>
            <person name="Small K.V."/>
            <person name="Sandusky M."/>
            <person name="Fuhrmann J.L."/>
            <person name="Nguyen D.T."/>
            <person name="Utterback T.R."/>
            <person name="Saudek D.M."/>
            <person name="Phillips C.A."/>
            <person name="Merrick J.M."/>
            <person name="Tomb J.-F."/>
            <person name="Dougherty B.A."/>
            <person name="Bott K.F."/>
            <person name="Hu P.-C."/>
            <person name="Lucier T.S."/>
            <person name="Peterson S.N."/>
            <person name="Smith H.O."/>
            <person name="Hutchison C.A. III"/>
            <person name="Venter J.C."/>
        </authorList>
    </citation>
    <scope>NUCLEOTIDE SEQUENCE [LARGE SCALE GENOMIC DNA]</scope>
    <source>
        <strain>ATCC 33530 / DSM 19775 / NCTC 10195 / G37</strain>
    </source>
</reference>
<comment type="similarity">
    <text evidence="1">Belongs to the MG032/MG096/MG288 family.</text>
</comment>